<dbReference type="EC" id="3.6.1.9" evidence="1"/>
<dbReference type="EMBL" id="AE017220">
    <property type="protein sequence ID" value="AAX67215.1"/>
    <property type="molecule type" value="Genomic_DNA"/>
</dbReference>
<dbReference type="RefSeq" id="WP_000210306.1">
    <property type="nucleotide sequence ID" value="NC_006905.1"/>
</dbReference>
<dbReference type="SMR" id="Q57J97"/>
<dbReference type="KEGG" id="sec:SCH_3309"/>
<dbReference type="HOGENOM" id="CLU_040416_2_1_6"/>
<dbReference type="Proteomes" id="UP000000538">
    <property type="component" value="Chromosome"/>
</dbReference>
<dbReference type="GO" id="GO:0005737">
    <property type="term" value="C:cytoplasm"/>
    <property type="evidence" value="ECO:0007669"/>
    <property type="project" value="UniProtKB-SubCell"/>
</dbReference>
<dbReference type="GO" id="GO:0036218">
    <property type="term" value="F:dTTP diphosphatase activity"/>
    <property type="evidence" value="ECO:0007669"/>
    <property type="project" value="RHEA"/>
</dbReference>
<dbReference type="GO" id="GO:0036221">
    <property type="term" value="F:UTP diphosphatase activity"/>
    <property type="evidence" value="ECO:0007669"/>
    <property type="project" value="RHEA"/>
</dbReference>
<dbReference type="GO" id="GO:0009117">
    <property type="term" value="P:nucleotide metabolic process"/>
    <property type="evidence" value="ECO:0007669"/>
    <property type="project" value="UniProtKB-KW"/>
</dbReference>
<dbReference type="CDD" id="cd00555">
    <property type="entry name" value="Maf"/>
    <property type="match status" value="1"/>
</dbReference>
<dbReference type="FunFam" id="3.90.950.10:FF:000004">
    <property type="entry name" value="dTTP/UTP pyrophosphatase"/>
    <property type="match status" value="1"/>
</dbReference>
<dbReference type="Gene3D" id="3.90.950.10">
    <property type="match status" value="1"/>
</dbReference>
<dbReference type="HAMAP" id="MF_00528">
    <property type="entry name" value="Maf"/>
    <property type="match status" value="1"/>
</dbReference>
<dbReference type="InterPro" id="IPR029001">
    <property type="entry name" value="ITPase-like_fam"/>
</dbReference>
<dbReference type="InterPro" id="IPR003697">
    <property type="entry name" value="Maf-like"/>
</dbReference>
<dbReference type="NCBIfam" id="TIGR00172">
    <property type="entry name" value="maf"/>
    <property type="match status" value="1"/>
</dbReference>
<dbReference type="PANTHER" id="PTHR43213">
    <property type="entry name" value="BIFUNCTIONAL DTTP/UTP PYROPHOSPHATASE/METHYLTRANSFERASE PROTEIN-RELATED"/>
    <property type="match status" value="1"/>
</dbReference>
<dbReference type="PANTHER" id="PTHR43213:SF5">
    <property type="entry name" value="BIFUNCTIONAL DTTP_UTP PYROPHOSPHATASE_METHYLTRANSFERASE PROTEIN-RELATED"/>
    <property type="match status" value="1"/>
</dbReference>
<dbReference type="Pfam" id="PF02545">
    <property type="entry name" value="Maf"/>
    <property type="match status" value="1"/>
</dbReference>
<dbReference type="PIRSF" id="PIRSF006305">
    <property type="entry name" value="Maf"/>
    <property type="match status" value="1"/>
</dbReference>
<dbReference type="SUPFAM" id="SSF52972">
    <property type="entry name" value="ITPase-like"/>
    <property type="match status" value="1"/>
</dbReference>
<name>NTPPA_SALCH</name>
<feature type="chain" id="PRO_0000267420" description="dTTP/UTP pyrophosphatase">
    <location>
        <begin position="1"/>
        <end position="197"/>
    </location>
</feature>
<feature type="active site" description="Proton acceptor" evidence="1">
    <location>
        <position position="70"/>
    </location>
</feature>
<feature type="site" description="Important for substrate specificity" evidence="1">
    <location>
        <position position="12"/>
    </location>
</feature>
<feature type="site" description="Important for substrate specificity" evidence="1">
    <location>
        <position position="71"/>
    </location>
</feature>
<feature type="site" description="Important for substrate specificity" evidence="1">
    <location>
        <position position="153"/>
    </location>
</feature>
<keyword id="KW-0963">Cytoplasm</keyword>
<keyword id="KW-0378">Hydrolase</keyword>
<keyword id="KW-0546">Nucleotide metabolism</keyword>
<evidence type="ECO:0000255" key="1">
    <source>
        <dbReference type="HAMAP-Rule" id="MF_00528"/>
    </source>
</evidence>
<reference key="1">
    <citation type="journal article" date="2005" name="Nucleic Acids Res.">
        <title>The genome sequence of Salmonella enterica serovar Choleraesuis, a highly invasive and resistant zoonotic pathogen.</title>
        <authorList>
            <person name="Chiu C.-H."/>
            <person name="Tang P."/>
            <person name="Chu C."/>
            <person name="Hu S."/>
            <person name="Bao Q."/>
            <person name="Yu J."/>
            <person name="Chou Y.-Y."/>
            <person name="Wang H.-S."/>
            <person name="Lee Y.-S."/>
        </authorList>
    </citation>
    <scope>NUCLEOTIDE SEQUENCE [LARGE SCALE GENOMIC DNA]</scope>
    <source>
        <strain>SC-B67</strain>
    </source>
</reference>
<accession>Q57J97</accession>
<proteinExistence type="inferred from homology"/>
<sequence>MTTLYLASGSPRRQELLTQLGFSFEQVVPGIEEQRRAQESAQQYVVRLAREKAQAGVALVPRDLPVLGADTIVVLNGEVLEKPRDAAHAAEMLRLLSGNTHQVMTAVALADSQQTLDCLVVTEVTFRTLSAQDITGYVASGEPLDKAGAYGIQGRGGCFVRKINGSYHAVVGLPLVETYELLSHFNALRDKRDKHDG</sequence>
<protein>
    <recommendedName>
        <fullName evidence="1">dTTP/UTP pyrophosphatase</fullName>
        <shortName evidence="1">dTTPase/UTPase</shortName>
        <ecNumber evidence="1">3.6.1.9</ecNumber>
    </recommendedName>
    <alternativeName>
        <fullName evidence="1">Nucleoside triphosphate pyrophosphatase</fullName>
    </alternativeName>
    <alternativeName>
        <fullName evidence="1">Nucleotide pyrophosphatase</fullName>
        <shortName evidence="1">Nucleotide PPase</shortName>
    </alternativeName>
</protein>
<gene>
    <name type="primary">yceF2</name>
    <name type="ordered locus">SCH_3309</name>
</gene>
<comment type="function">
    <text evidence="1">Nucleoside triphosphate pyrophosphatase that hydrolyzes dTTP and UTP. May have a dual role in cell division arrest and in preventing the incorporation of modified nucleotides into cellular nucleic acids.</text>
</comment>
<comment type="catalytic activity">
    <reaction evidence="1">
        <text>dTTP + H2O = dTMP + diphosphate + H(+)</text>
        <dbReference type="Rhea" id="RHEA:28534"/>
        <dbReference type="ChEBI" id="CHEBI:15377"/>
        <dbReference type="ChEBI" id="CHEBI:15378"/>
        <dbReference type="ChEBI" id="CHEBI:33019"/>
        <dbReference type="ChEBI" id="CHEBI:37568"/>
        <dbReference type="ChEBI" id="CHEBI:63528"/>
        <dbReference type="EC" id="3.6.1.9"/>
    </reaction>
</comment>
<comment type="catalytic activity">
    <reaction evidence="1">
        <text>UTP + H2O = UMP + diphosphate + H(+)</text>
        <dbReference type="Rhea" id="RHEA:29395"/>
        <dbReference type="ChEBI" id="CHEBI:15377"/>
        <dbReference type="ChEBI" id="CHEBI:15378"/>
        <dbReference type="ChEBI" id="CHEBI:33019"/>
        <dbReference type="ChEBI" id="CHEBI:46398"/>
        <dbReference type="ChEBI" id="CHEBI:57865"/>
        <dbReference type="EC" id="3.6.1.9"/>
    </reaction>
</comment>
<comment type="cofactor">
    <cofactor evidence="1">
        <name>a divalent metal cation</name>
        <dbReference type="ChEBI" id="CHEBI:60240"/>
    </cofactor>
</comment>
<comment type="subcellular location">
    <subcellularLocation>
        <location evidence="1">Cytoplasm</location>
    </subcellularLocation>
</comment>
<comment type="similarity">
    <text evidence="1">Belongs to the Maf family. YhdE subfamily.</text>
</comment>
<organism>
    <name type="scientific">Salmonella choleraesuis (strain SC-B67)</name>
    <dbReference type="NCBI Taxonomy" id="321314"/>
    <lineage>
        <taxon>Bacteria</taxon>
        <taxon>Pseudomonadati</taxon>
        <taxon>Pseudomonadota</taxon>
        <taxon>Gammaproteobacteria</taxon>
        <taxon>Enterobacterales</taxon>
        <taxon>Enterobacteriaceae</taxon>
        <taxon>Salmonella</taxon>
    </lineage>
</organism>